<proteinExistence type="evidence at transcript level"/>
<sequence length="325" mass="36989">MITDRQLSILNAIVEDYVDFGQPVGSKTLIERHNLNVSPATIRNEMKQLEDLNYIEKTHSSSGRSPSQLGFRYYVNRLLEQTSHQKTNKLRRLNQLLVENQYDVSSALTYFADELSNISQYTTLVVHPNHKQDIINNVHLIRANPNLVIMVIVFSSGHVEHVHLASDIPFSNDKLNTISNFVTNKLTEFNQNLQDDIVSFVQSEQEEIFINKLINTMNNHISNQSNSIYMGGKVKLIDALNESNVSSIQPILQYIESNRIAELLQDISSPNINVKIGNEIDDSLSDISIVTSQYHFDETLKGQIAVIGPTAMHYQNVIQLLNRIW</sequence>
<name>HRCA_STAAN</name>
<evidence type="ECO:0000255" key="1">
    <source>
        <dbReference type="HAMAP-Rule" id="MF_00081"/>
    </source>
</evidence>
<dbReference type="EMBL" id="BA000018">
    <property type="protein sequence ID" value="BAB42674.1"/>
    <property type="molecule type" value="Genomic_DNA"/>
</dbReference>
<dbReference type="PIR" id="E89939">
    <property type="entry name" value="E89939"/>
</dbReference>
<dbReference type="RefSeq" id="WP_000627144.1">
    <property type="nucleotide sequence ID" value="NC_002745.2"/>
</dbReference>
<dbReference type="SMR" id="P68793"/>
<dbReference type="EnsemblBacteria" id="BAB42674">
    <property type="protein sequence ID" value="BAB42674"/>
    <property type="gene ID" value="BAB42674"/>
</dbReference>
<dbReference type="KEGG" id="sau:SA1411"/>
<dbReference type="HOGENOM" id="CLU_050019_1_0_9"/>
<dbReference type="GO" id="GO:0003677">
    <property type="term" value="F:DNA binding"/>
    <property type="evidence" value="ECO:0007669"/>
    <property type="project" value="InterPro"/>
</dbReference>
<dbReference type="GO" id="GO:0045892">
    <property type="term" value="P:negative regulation of DNA-templated transcription"/>
    <property type="evidence" value="ECO:0007669"/>
    <property type="project" value="UniProtKB-UniRule"/>
</dbReference>
<dbReference type="FunFam" id="1.10.10.10:FF:000049">
    <property type="entry name" value="Heat-inducible transcription repressor HrcA"/>
    <property type="match status" value="1"/>
</dbReference>
<dbReference type="Gene3D" id="3.30.450.40">
    <property type="match status" value="1"/>
</dbReference>
<dbReference type="Gene3D" id="3.30.390.60">
    <property type="entry name" value="Heat-inducible transcription repressor hrca homolog, domain 3"/>
    <property type="match status" value="1"/>
</dbReference>
<dbReference type="Gene3D" id="1.10.10.10">
    <property type="entry name" value="Winged helix-like DNA-binding domain superfamily/Winged helix DNA-binding domain"/>
    <property type="match status" value="1"/>
</dbReference>
<dbReference type="HAMAP" id="MF_00081">
    <property type="entry name" value="HrcA"/>
    <property type="match status" value="1"/>
</dbReference>
<dbReference type="InterPro" id="IPR029016">
    <property type="entry name" value="GAF-like_dom_sf"/>
</dbReference>
<dbReference type="InterPro" id="IPR002571">
    <property type="entry name" value="HrcA"/>
</dbReference>
<dbReference type="InterPro" id="IPR021153">
    <property type="entry name" value="HrcA_C"/>
</dbReference>
<dbReference type="InterPro" id="IPR036388">
    <property type="entry name" value="WH-like_DNA-bd_sf"/>
</dbReference>
<dbReference type="InterPro" id="IPR036390">
    <property type="entry name" value="WH_DNA-bd_sf"/>
</dbReference>
<dbReference type="InterPro" id="IPR023120">
    <property type="entry name" value="WHTH_transcript_rep_HrcA_IDD"/>
</dbReference>
<dbReference type="NCBIfam" id="TIGR00331">
    <property type="entry name" value="hrcA"/>
    <property type="match status" value="1"/>
</dbReference>
<dbReference type="PANTHER" id="PTHR34824">
    <property type="entry name" value="HEAT-INDUCIBLE TRANSCRIPTION REPRESSOR HRCA"/>
    <property type="match status" value="1"/>
</dbReference>
<dbReference type="PANTHER" id="PTHR34824:SF1">
    <property type="entry name" value="HEAT-INDUCIBLE TRANSCRIPTION REPRESSOR HRCA"/>
    <property type="match status" value="1"/>
</dbReference>
<dbReference type="Pfam" id="PF01628">
    <property type="entry name" value="HrcA"/>
    <property type="match status" value="1"/>
</dbReference>
<dbReference type="PIRSF" id="PIRSF005485">
    <property type="entry name" value="HrcA"/>
    <property type="match status" value="1"/>
</dbReference>
<dbReference type="SUPFAM" id="SSF55781">
    <property type="entry name" value="GAF domain-like"/>
    <property type="match status" value="1"/>
</dbReference>
<dbReference type="SUPFAM" id="SSF46785">
    <property type="entry name" value="Winged helix' DNA-binding domain"/>
    <property type="match status" value="1"/>
</dbReference>
<keyword id="KW-0678">Repressor</keyword>
<keyword id="KW-0346">Stress response</keyword>
<keyword id="KW-0804">Transcription</keyword>
<keyword id="KW-0805">Transcription regulation</keyword>
<feature type="chain" id="PRO_0000182527" description="Heat-inducible transcription repressor HrcA">
    <location>
        <begin position="1"/>
        <end position="325"/>
    </location>
</feature>
<comment type="function">
    <text evidence="1">Negative regulator of class I heat shock genes (grpE-dnaK-dnaJ and groELS operons). Prevents heat-shock induction of these operons.</text>
</comment>
<comment type="induction">
    <text>By heat shock.</text>
</comment>
<comment type="similarity">
    <text evidence="1">Belongs to the HrcA family.</text>
</comment>
<protein>
    <recommendedName>
        <fullName evidence="1">Heat-inducible transcription repressor HrcA</fullName>
    </recommendedName>
</protein>
<organism>
    <name type="scientific">Staphylococcus aureus (strain N315)</name>
    <dbReference type="NCBI Taxonomy" id="158879"/>
    <lineage>
        <taxon>Bacteria</taxon>
        <taxon>Bacillati</taxon>
        <taxon>Bacillota</taxon>
        <taxon>Bacilli</taxon>
        <taxon>Bacillales</taxon>
        <taxon>Staphylococcaceae</taxon>
        <taxon>Staphylococcus</taxon>
    </lineage>
</organism>
<gene>
    <name evidence="1" type="primary">hrcA</name>
    <name type="ordered locus">SA1411</name>
</gene>
<accession>P68793</accession>
<accession>P45556</accession>
<reference key="1">
    <citation type="journal article" date="2001" name="Lancet">
        <title>Whole genome sequencing of meticillin-resistant Staphylococcus aureus.</title>
        <authorList>
            <person name="Kuroda M."/>
            <person name="Ohta T."/>
            <person name="Uchiyama I."/>
            <person name="Baba T."/>
            <person name="Yuzawa H."/>
            <person name="Kobayashi I."/>
            <person name="Cui L."/>
            <person name="Oguchi A."/>
            <person name="Aoki K."/>
            <person name="Nagai Y."/>
            <person name="Lian J.-Q."/>
            <person name="Ito T."/>
            <person name="Kanamori M."/>
            <person name="Matsumaru H."/>
            <person name="Maruyama A."/>
            <person name="Murakami H."/>
            <person name="Hosoyama A."/>
            <person name="Mizutani-Ui Y."/>
            <person name="Takahashi N.K."/>
            <person name="Sawano T."/>
            <person name="Inoue R."/>
            <person name="Kaito C."/>
            <person name="Sekimizu K."/>
            <person name="Hirakawa H."/>
            <person name="Kuhara S."/>
            <person name="Goto S."/>
            <person name="Yabuzaki J."/>
            <person name="Kanehisa M."/>
            <person name="Yamashita A."/>
            <person name="Oshima K."/>
            <person name="Furuya K."/>
            <person name="Yoshino C."/>
            <person name="Shiba T."/>
            <person name="Hattori M."/>
            <person name="Ogasawara N."/>
            <person name="Hayashi H."/>
            <person name="Hiramatsu K."/>
        </authorList>
    </citation>
    <scope>NUCLEOTIDE SEQUENCE [LARGE SCALE GENOMIC DNA]</scope>
    <source>
        <strain>N315</strain>
    </source>
</reference>